<accession>A8AI24</accession>
<name>TRHO_CITK8</name>
<keyword id="KW-0560">Oxidoreductase</keyword>
<keyword id="KW-1185">Reference proteome</keyword>
<keyword id="KW-0819">tRNA processing</keyword>
<comment type="function">
    <text evidence="1">Catalyzes oxygen-dependent 5-hydroxyuridine (ho5U) modification at position 34 in tRNAs.</text>
</comment>
<comment type="catalytic activity">
    <reaction evidence="1">
        <text>uridine(34) in tRNA + AH2 + O2 = 5-hydroxyuridine(34) in tRNA + A + H2O</text>
        <dbReference type="Rhea" id="RHEA:64224"/>
        <dbReference type="Rhea" id="RHEA-COMP:11727"/>
        <dbReference type="Rhea" id="RHEA-COMP:13381"/>
        <dbReference type="ChEBI" id="CHEBI:13193"/>
        <dbReference type="ChEBI" id="CHEBI:15377"/>
        <dbReference type="ChEBI" id="CHEBI:15379"/>
        <dbReference type="ChEBI" id="CHEBI:17499"/>
        <dbReference type="ChEBI" id="CHEBI:65315"/>
        <dbReference type="ChEBI" id="CHEBI:136877"/>
    </reaction>
</comment>
<comment type="similarity">
    <text evidence="1">Belongs to the TrhO family.</text>
</comment>
<organism>
    <name type="scientific">Citrobacter koseri (strain ATCC BAA-895 / CDC 4225-83 / SGSC4696)</name>
    <dbReference type="NCBI Taxonomy" id="290338"/>
    <lineage>
        <taxon>Bacteria</taxon>
        <taxon>Pseudomonadati</taxon>
        <taxon>Pseudomonadota</taxon>
        <taxon>Gammaproteobacteria</taxon>
        <taxon>Enterobacterales</taxon>
        <taxon>Enterobacteriaceae</taxon>
        <taxon>Citrobacter</taxon>
    </lineage>
</organism>
<feature type="chain" id="PRO_1000013735" description="tRNA uridine(34) hydroxylase">
    <location>
        <begin position="1"/>
        <end position="350"/>
    </location>
</feature>
<feature type="domain" description="Rhodanese" evidence="1">
    <location>
        <begin position="146"/>
        <end position="240"/>
    </location>
</feature>
<feature type="region of interest" description="Disordered" evidence="2">
    <location>
        <begin position="314"/>
        <end position="350"/>
    </location>
</feature>
<feature type="compositionally biased region" description="Basic and acidic residues" evidence="2">
    <location>
        <begin position="316"/>
        <end position="328"/>
    </location>
</feature>
<feature type="active site" description="Cysteine persulfide intermediate" evidence="1">
    <location>
        <position position="200"/>
    </location>
</feature>
<protein>
    <recommendedName>
        <fullName evidence="1">tRNA uridine(34) hydroxylase</fullName>
        <ecNumber evidence="1">1.14.-.-</ecNumber>
    </recommendedName>
    <alternativeName>
        <fullName evidence="1">tRNA hydroxylation protein O</fullName>
    </alternativeName>
</protein>
<sequence>MPVLHNRISNDALKARMLAETEPRTTISFYKYFTIVDPQSTRDALYQMFTSLNVFGRVYLAREGINAQISVPQSQVAAFREQLYAFDPALNGLRLNIALDDDGKSFWVLRMKVRERIVADGIDDPNFDASDVGEYLKAAEVNAMLDDPDAVFIDMRNHYEYEVGHFENALEIPADTFREQLPKAVEMMQEHRDKKIVMYCTGGIRCEKASAWMKHNGFNKVWHIEGGIIEYARKAREQGLPVRFIGKNFVFDERMGERISDEVIAHCHQCGAPCDSHTNCKNDGCHLLFIQCPACAEKFKGCCSELCCEESSLPEEEQRRRRAGRENGNKIFNKSRGRLNTQLGIPDPAE</sequence>
<proteinExistence type="inferred from homology"/>
<evidence type="ECO:0000255" key="1">
    <source>
        <dbReference type="HAMAP-Rule" id="MF_00469"/>
    </source>
</evidence>
<evidence type="ECO:0000256" key="2">
    <source>
        <dbReference type="SAM" id="MobiDB-lite"/>
    </source>
</evidence>
<dbReference type="EC" id="1.14.-.-" evidence="1"/>
<dbReference type="EMBL" id="CP000822">
    <property type="protein sequence ID" value="ABV13137.1"/>
    <property type="molecule type" value="Genomic_DNA"/>
</dbReference>
<dbReference type="RefSeq" id="WP_012132873.1">
    <property type="nucleotide sequence ID" value="NC_009792.1"/>
</dbReference>
<dbReference type="SMR" id="A8AI24"/>
<dbReference type="STRING" id="290338.CKO_02011"/>
<dbReference type="GeneID" id="45135977"/>
<dbReference type="KEGG" id="cko:CKO_02011"/>
<dbReference type="HOGENOM" id="CLU_038878_1_1_6"/>
<dbReference type="OrthoDB" id="9778326at2"/>
<dbReference type="Proteomes" id="UP000008148">
    <property type="component" value="Chromosome"/>
</dbReference>
<dbReference type="GO" id="GO:0016705">
    <property type="term" value="F:oxidoreductase activity, acting on paired donors, with incorporation or reduction of molecular oxygen"/>
    <property type="evidence" value="ECO:0007669"/>
    <property type="project" value="UniProtKB-UniRule"/>
</dbReference>
<dbReference type="GO" id="GO:0006400">
    <property type="term" value="P:tRNA modification"/>
    <property type="evidence" value="ECO:0007669"/>
    <property type="project" value="UniProtKB-UniRule"/>
</dbReference>
<dbReference type="CDD" id="cd01518">
    <property type="entry name" value="RHOD_YceA"/>
    <property type="match status" value="1"/>
</dbReference>
<dbReference type="Gene3D" id="3.30.70.100">
    <property type="match status" value="1"/>
</dbReference>
<dbReference type="Gene3D" id="3.40.250.10">
    <property type="entry name" value="Rhodanese-like domain"/>
    <property type="match status" value="1"/>
</dbReference>
<dbReference type="HAMAP" id="MF_00469">
    <property type="entry name" value="TrhO"/>
    <property type="match status" value="1"/>
</dbReference>
<dbReference type="InterPro" id="IPR001763">
    <property type="entry name" value="Rhodanese-like_dom"/>
</dbReference>
<dbReference type="InterPro" id="IPR036873">
    <property type="entry name" value="Rhodanese-like_dom_sf"/>
</dbReference>
<dbReference type="InterPro" id="IPR022111">
    <property type="entry name" value="Rhodanese_C"/>
</dbReference>
<dbReference type="InterPro" id="IPR020936">
    <property type="entry name" value="TrhO"/>
</dbReference>
<dbReference type="InterPro" id="IPR040503">
    <property type="entry name" value="TRHO_N"/>
</dbReference>
<dbReference type="NCBIfam" id="NF001133">
    <property type="entry name" value="PRK00142.1-1"/>
    <property type="match status" value="1"/>
</dbReference>
<dbReference type="PANTHER" id="PTHR43846:SF1">
    <property type="entry name" value="TRNA URIDINE(34) HYDROXYLASE"/>
    <property type="match status" value="1"/>
</dbReference>
<dbReference type="PANTHER" id="PTHR43846">
    <property type="entry name" value="UPF0176 PROTEIN YCEA"/>
    <property type="match status" value="1"/>
</dbReference>
<dbReference type="Pfam" id="PF00581">
    <property type="entry name" value="Rhodanese"/>
    <property type="match status" value="1"/>
</dbReference>
<dbReference type="Pfam" id="PF12368">
    <property type="entry name" value="Rhodanese_C"/>
    <property type="match status" value="1"/>
</dbReference>
<dbReference type="Pfam" id="PF17773">
    <property type="entry name" value="UPF0176_N"/>
    <property type="match status" value="1"/>
</dbReference>
<dbReference type="SMART" id="SM00450">
    <property type="entry name" value="RHOD"/>
    <property type="match status" value="1"/>
</dbReference>
<dbReference type="SUPFAM" id="SSF52821">
    <property type="entry name" value="Rhodanese/Cell cycle control phosphatase"/>
    <property type="match status" value="1"/>
</dbReference>
<dbReference type="PROSITE" id="PS50206">
    <property type="entry name" value="RHODANESE_3"/>
    <property type="match status" value="1"/>
</dbReference>
<gene>
    <name evidence="1" type="primary">trhO</name>
    <name type="ordered locus">CKO_02011</name>
</gene>
<reference key="1">
    <citation type="submission" date="2007-08" db="EMBL/GenBank/DDBJ databases">
        <authorList>
            <consortium name="The Citrobacter koseri Genome Sequencing Project"/>
            <person name="McClelland M."/>
            <person name="Sanderson E.K."/>
            <person name="Porwollik S."/>
            <person name="Spieth J."/>
            <person name="Clifton W.S."/>
            <person name="Latreille P."/>
            <person name="Courtney L."/>
            <person name="Wang C."/>
            <person name="Pepin K."/>
            <person name="Bhonagiri V."/>
            <person name="Nash W."/>
            <person name="Johnson M."/>
            <person name="Thiruvilangam P."/>
            <person name="Wilson R."/>
        </authorList>
    </citation>
    <scope>NUCLEOTIDE SEQUENCE [LARGE SCALE GENOMIC DNA]</scope>
    <source>
        <strain>ATCC BAA-895 / CDC 4225-83 / SGSC4696</strain>
    </source>
</reference>